<accession>P10322</accession>
<sequence>MVYSNTYMLLGLGVFVLLSSHVLAYNMRADPSIHDSTLDDQKSNDFVKTASIAECPPGPDTYLELSDSTLDDQKSMDYVKDASTVDHNCPPGPHTYLELSAWLQEEQNSIDKVKKVLRTDEAPDNQKGLEYKDARHNDGPIEISTRTEKDNFIPSDGPIEISTRTENENFIPSDEPIEISTGTEKENFISSDEPSEISSGAEKENFIPSVSQVDWRTFHAKYPWIKKDGPNTVTGSRKLLNDIAIK</sequence>
<keyword id="KW-0535">Nitrogen fixation</keyword>
<keyword id="KW-0536">Nodulation</keyword>
<keyword id="KW-0732">Signal</keyword>
<reference key="1">
    <citation type="journal article" date="1990" name="Plant Mol. Biol.">
        <title>Identification and cDNA cloning of a new nodule-specific gene, Nms-25 (nodulin-25) of Medicago sativa.</title>
        <authorList>
            <person name="Kiss G.B."/>
            <person name="Vincze E."/>
            <person name="Vegh Z."/>
            <person name="Toth G."/>
            <person name="Soos J."/>
        </authorList>
    </citation>
    <scope>NUCLEOTIDE SEQUENCE [MRNA]</scope>
    <source>
        <strain>cv. Cardinal</strain>
    </source>
</reference>
<reference key="2">
    <citation type="journal article" date="1990" name="Plant Mol. Biol.">
        <title>The nucleotide sequence of a nodule-specific gene, Nms-25 of Medicago sativa: its primary evolution via exon-shuffling and retrotransposon-mediated DNA rearrangements.</title>
        <authorList>
            <person name="Vegh Z."/>
            <person name="Vincze E."/>
            <person name="Kadirov R."/>
            <person name="Toth G."/>
            <person name="Kiss G.B."/>
        </authorList>
    </citation>
    <scope>NUCLEOTIDE SEQUENCE [GENOMIC DNA]</scope>
    <source>
        <strain>cv. Nagyszenasi</strain>
    </source>
</reference>
<feature type="signal peptide">
    <location>
        <begin position="1"/>
        <end position="24"/>
    </location>
</feature>
<feature type="chain" id="PRO_0000019798" description="Nodulin-25">
    <location>
        <begin position="25"/>
        <end position="246"/>
    </location>
</feature>
<feature type="sequence variant" description="In strain: cv. Cardinal; clone 910.">
    <original>M</original>
    <variation>I</variation>
    <location>
        <position position="76"/>
    </location>
</feature>
<feature type="sequence variant" description="In strain: cv. Cardinal; clone 910.">
    <original>L</original>
    <variation>P</variation>
    <location>
        <position position="97"/>
    </location>
</feature>
<feature type="sequence variant" description="In strain: cv. Cardinal; clone 910.">
    <original>R</original>
    <variation>G</variation>
    <location>
        <position position="146"/>
    </location>
</feature>
<feature type="sequence variant" description="In strain: cv. Cardinal; clone 910.">
    <original>D</original>
    <variation>E</variation>
    <location>
        <position position="150"/>
    </location>
</feature>
<feature type="sequence variant" description="In strain: cv. Cardinal; clone 386.">
    <original>S</original>
    <variation>P</variation>
    <location>
        <position position="190"/>
    </location>
</feature>
<feature type="sequence variant" description="In strain: cv. Cardinal; clones 386 and 910.">
    <original>S</original>
    <variation>P</variation>
    <location>
        <position position="195"/>
    </location>
</feature>
<feature type="sequence variant" description="In strain: cv. Cardinal; clone 386.">
    <original>P</original>
    <variation>L</variation>
    <location>
        <position position="223"/>
    </location>
</feature>
<feature type="sequence variant" description="In strain: cv. Cardinal; clone 910.">
    <original>I</original>
    <variation>N</variation>
    <location>
        <position position="245"/>
    </location>
</feature>
<feature type="sequence variant" description="In strain: cv. Cardinal; clone 386.">
    <original>I</original>
    <variation>S</variation>
    <location>
        <position position="245"/>
    </location>
</feature>
<proteinExistence type="evidence at transcript level"/>
<gene>
    <name type="primary">NMS-25</name>
</gene>
<dbReference type="EMBL" id="X13289">
    <property type="protein sequence ID" value="CAA31646.1"/>
    <property type="molecule type" value="mRNA"/>
</dbReference>
<dbReference type="EMBL" id="X13288">
    <property type="protein sequence ID" value="CAA31645.1"/>
    <property type="molecule type" value="mRNA"/>
</dbReference>
<dbReference type="EMBL" id="X13287">
    <property type="protein sequence ID" value="CAA31644.1"/>
    <property type="molecule type" value="Genomic_DNA"/>
</dbReference>
<dbReference type="PIR" id="S11873">
    <property type="entry name" value="ZZAACD"/>
</dbReference>
<dbReference type="PIR" id="S14710">
    <property type="entry name" value="ZZAAGY"/>
</dbReference>
<dbReference type="GO" id="GO:0043662">
    <property type="term" value="C:peribacteroid fluid"/>
    <property type="evidence" value="ECO:0007669"/>
    <property type="project" value="UniProtKB-SubCell"/>
</dbReference>
<dbReference type="GO" id="GO:0009877">
    <property type="term" value="P:nodulation"/>
    <property type="evidence" value="ECO:0007669"/>
    <property type="project" value="UniProtKB-KW"/>
</dbReference>
<name>NO25_MEDSA</name>
<comment type="function">
    <text>Involved in the development and function of nodules. It might participate in the biological process of symbiotic nitrogen fixation.</text>
</comment>
<comment type="subcellular location">
    <subcellularLocation>
        <location>Symbiosome</location>
        <location>Peribacteroid space</location>
    </subcellularLocation>
</comment>
<comment type="miscellaneous">
    <text>The sequence shown is that of cv. Nagyszenasi.</text>
</comment>
<organism>
    <name type="scientific">Medicago sativa</name>
    <name type="common">Alfalfa</name>
    <dbReference type="NCBI Taxonomy" id="3879"/>
    <lineage>
        <taxon>Eukaryota</taxon>
        <taxon>Viridiplantae</taxon>
        <taxon>Streptophyta</taxon>
        <taxon>Embryophyta</taxon>
        <taxon>Tracheophyta</taxon>
        <taxon>Spermatophyta</taxon>
        <taxon>Magnoliopsida</taxon>
        <taxon>eudicotyledons</taxon>
        <taxon>Gunneridae</taxon>
        <taxon>Pentapetalae</taxon>
        <taxon>rosids</taxon>
        <taxon>fabids</taxon>
        <taxon>Fabales</taxon>
        <taxon>Fabaceae</taxon>
        <taxon>Papilionoideae</taxon>
        <taxon>50 kb inversion clade</taxon>
        <taxon>NPAAA clade</taxon>
        <taxon>Hologalegina</taxon>
        <taxon>IRL clade</taxon>
        <taxon>Trifolieae</taxon>
        <taxon>Medicago</taxon>
    </lineage>
</organism>
<protein>
    <recommendedName>
        <fullName>Nodulin-25</fullName>
        <shortName>N-25</shortName>
    </recommendedName>
</protein>